<organismHost>
    <name type="scientific">Mammalia</name>
    <dbReference type="NCBI Taxonomy" id="40674"/>
</organismHost>
<organism>
    <name type="scientific">Reovirus type 2 (strain D5/Jones)</name>
    <name type="common">T2J</name>
    <name type="synonym">Mammalian orthoreovirus 2</name>
    <dbReference type="NCBI Taxonomy" id="10885"/>
    <lineage>
        <taxon>Viruses</taxon>
        <taxon>Riboviria</taxon>
        <taxon>Orthornavirae</taxon>
        <taxon>Duplornaviricota</taxon>
        <taxon>Resentoviricetes</taxon>
        <taxon>Reovirales</taxon>
        <taxon>Spinareoviridae</taxon>
        <taxon>Orthoreovirus</taxon>
        <taxon>Mammalian orthoreovirus</taxon>
    </lineage>
</organism>
<reference key="1">
    <citation type="journal article" date="1985" name="Proc. Natl. Acad. Sci. U.S.A.">
        <title>Sequences of the S1 genes of the three serotypes of reovirus.</title>
        <authorList>
            <person name="Cashdollar L.W."/>
            <person name="Chmelo R.A."/>
            <person name="Wiener J.R."/>
            <person name="Joklik W.K."/>
        </authorList>
    </citation>
    <scope>NUCLEOTIDE SEQUENCE [GENOMIC RNA]</scope>
</reference>
<reference key="2">
    <citation type="journal article" date="1990" name="J. Virol.">
        <title>Structure of the reovirus cell-attachment protein: a model for the domain organization of sigma 1.</title>
        <authorList>
            <person name="Nibert M.L."/>
            <person name="Dermody T.S."/>
            <person name="Fields B.N."/>
        </authorList>
    </citation>
    <scope>NUCLEOTIDE SEQUENCE [GENOMIC RNA]</scope>
</reference>
<gene>
    <name type="primary">S1</name>
</gene>
<name>SIG1S_REOVJ</name>
<evidence type="ECO:0000305" key="1"/>
<accession>P32868</accession>
<accession>Q6LDZ2</accession>
<proteinExistence type="inferred from homology"/>
<protein>
    <recommendedName>
        <fullName>Protein sigma-1-small</fullName>
        <shortName>Sigma1s</shortName>
    </recommendedName>
    <alternativeName>
        <fullName>Sigma-s</fullName>
    </alternativeName>
    <alternativeName>
        <fullName>Sigma1NS</fullName>
    </alternativeName>
    <alternativeName>
        <fullName>Sigma1bNS</fullName>
    </alternativeName>
    <alternativeName>
        <fullName>p14</fullName>
    </alternativeName>
</protein>
<dbReference type="EMBL" id="M10261">
    <property type="protein sequence ID" value="AAA66880.1"/>
    <property type="molecule type" value="Genomic_RNA"/>
</dbReference>
<dbReference type="EMBL" id="M35964">
    <property type="protein sequence ID" value="AAA47252.1"/>
    <property type="molecule type" value="Genomic_RNA"/>
</dbReference>
<dbReference type="PIR" id="D34829">
    <property type="entry name" value="D34829"/>
</dbReference>
<dbReference type="SMR" id="P32868"/>
<dbReference type="Proteomes" id="UP000006370">
    <property type="component" value="Genome"/>
</dbReference>
<dbReference type="GO" id="GO:0039592">
    <property type="term" value="P:symbiont-mediated arrest of host cell cycle during G2/M transition"/>
    <property type="evidence" value="ECO:0007669"/>
    <property type="project" value="UniProtKB-KW"/>
</dbReference>
<dbReference type="InterPro" id="IPR003478">
    <property type="entry name" value="Capsid_sigma_1s"/>
</dbReference>
<dbReference type="Pfam" id="PF02454">
    <property type="entry name" value="Sigma_1s"/>
    <property type="match status" value="1"/>
</dbReference>
<sequence length="125" mass="14560">MENQPTRNTRSRKLRNKLKTSLLMSTGSVTSLIQSKDNWVDYLYACQPLNRELVRTAIELIDSSEMSPAYRLALAESIRVYPSWVTESMLQNSELASWIQSRIISLSEHQDWKLKYQPLLMTLDH</sequence>
<keyword id="KW-1079">Host G2/M cell cycle arrest by virus</keyword>
<keyword id="KW-0945">Host-virus interaction</keyword>
<keyword id="KW-1121">Modulation of host cell cycle by virus</keyword>
<comment type="similarity">
    <text evidence="1">Belongs to the orthoreovirus sigma-1s protein family.</text>
</comment>
<feature type="chain" id="PRO_0000222756" description="Protein sigma-1-small">
    <location>
        <begin position="1"/>
        <end position="125"/>
    </location>
</feature>